<protein>
    <recommendedName>
        <fullName evidence="1">Peptide chain release factor 3</fullName>
        <shortName evidence="1">RF-3</shortName>
    </recommendedName>
</protein>
<accession>Q38VL2</accession>
<proteinExistence type="inferred from homology"/>
<gene>
    <name evidence="1" type="primary">prfC</name>
    <name type="ordered locus">LCA_1469</name>
</gene>
<reference key="1">
    <citation type="journal article" date="2005" name="Nat. Biotechnol.">
        <title>The complete genome sequence of the meat-borne lactic acid bacterium Lactobacillus sakei 23K.</title>
        <authorList>
            <person name="Chaillou S."/>
            <person name="Champomier-Verges M.-C."/>
            <person name="Cornet M."/>
            <person name="Crutz-Le Coq A.-M."/>
            <person name="Dudez A.-M."/>
            <person name="Martin V."/>
            <person name="Beaufils S."/>
            <person name="Darbon-Rongere E."/>
            <person name="Bossy R."/>
            <person name="Loux V."/>
            <person name="Zagorec M."/>
        </authorList>
    </citation>
    <scope>NUCLEOTIDE SEQUENCE [LARGE SCALE GENOMIC DNA]</scope>
    <source>
        <strain>23K</strain>
    </source>
</reference>
<name>RF3_LATSS</name>
<evidence type="ECO:0000255" key="1">
    <source>
        <dbReference type="HAMAP-Rule" id="MF_00072"/>
    </source>
</evidence>
<comment type="function">
    <text evidence="1">Increases the formation of ribosomal termination complexes and stimulates activities of RF-1 and RF-2. It binds guanine nucleotides and has strong preference for UGA stop codons. It may interact directly with the ribosome. The stimulation of RF-1 and RF-2 is significantly reduced by GTP and GDP, but not by GMP.</text>
</comment>
<comment type="subcellular location">
    <subcellularLocation>
        <location evidence="1">Cytoplasm</location>
    </subcellularLocation>
</comment>
<comment type="similarity">
    <text evidence="1">Belongs to the TRAFAC class translation factor GTPase superfamily. Classic translation factor GTPase family. PrfC subfamily.</text>
</comment>
<feature type="chain" id="PRO_0000242186" description="Peptide chain release factor 3">
    <location>
        <begin position="1"/>
        <end position="525"/>
    </location>
</feature>
<feature type="domain" description="tr-type G">
    <location>
        <begin position="11"/>
        <end position="279"/>
    </location>
</feature>
<feature type="binding site" evidence="1">
    <location>
        <begin position="20"/>
        <end position="27"/>
    </location>
    <ligand>
        <name>GTP</name>
        <dbReference type="ChEBI" id="CHEBI:37565"/>
    </ligand>
</feature>
<feature type="binding site" evidence="1">
    <location>
        <begin position="88"/>
        <end position="92"/>
    </location>
    <ligand>
        <name>GTP</name>
        <dbReference type="ChEBI" id="CHEBI:37565"/>
    </ligand>
</feature>
<feature type="binding site" evidence="1">
    <location>
        <begin position="142"/>
        <end position="145"/>
    </location>
    <ligand>
        <name>GTP</name>
        <dbReference type="ChEBI" id="CHEBI:37565"/>
    </ligand>
</feature>
<sequence>MTPTELKTAVERRRTFAIISHPDAGKTTITEQLLLFGGVIRQAGTVKGKKSGQFAKSDWMDIEKQRGISVTSSVMQFDYAGKRINILDTPGHEDFSEDTYRTLMAVDAAVMVIDSAKGIEPQTKKLFKVCKMRGIPIFTFMNKLDRDGREPLDLIAELEELLDIEGCAMNWPIGMGKDLRGLYDIANKRIEMYRPEDEANPYLALDEEGKIAGDNPLKEDSVYTQALDDIELIGEAGNAYDPAKIATGDQTPIFFGSALTNFGVKTFLEAFVDMAPAPEAHQTQEETQVEPTNEDFSGFIFKIQANMNPAHRDRIAFVRVCSGEFQRGIDVTLTRTGKKMRLNNSTEFMADAREQVTSAVAGDIVGLYDTGNFQIGDTIHTGKEAISFEKLPQFTPELFMRVTAKNVMKQKSFHKGIQQLVQEGAIQLYKTYTTSDYILGAVGQLQFEVFQYRMQHEYNSEVIMEPIGSRTARWIDPEKLDQSMSSSRNLLVKDIHDQPLFLFENKFAERWFQDKYPEVKLTAKL</sequence>
<organism>
    <name type="scientific">Latilactobacillus sakei subsp. sakei (strain 23K)</name>
    <name type="common">Lactobacillus sakei subsp. sakei</name>
    <dbReference type="NCBI Taxonomy" id="314315"/>
    <lineage>
        <taxon>Bacteria</taxon>
        <taxon>Bacillati</taxon>
        <taxon>Bacillota</taxon>
        <taxon>Bacilli</taxon>
        <taxon>Lactobacillales</taxon>
        <taxon>Lactobacillaceae</taxon>
        <taxon>Latilactobacillus</taxon>
    </lineage>
</organism>
<keyword id="KW-0963">Cytoplasm</keyword>
<keyword id="KW-0342">GTP-binding</keyword>
<keyword id="KW-0547">Nucleotide-binding</keyword>
<keyword id="KW-0648">Protein biosynthesis</keyword>
<keyword id="KW-1185">Reference proteome</keyword>
<dbReference type="EMBL" id="CR936503">
    <property type="protein sequence ID" value="CAI55771.1"/>
    <property type="molecule type" value="Genomic_DNA"/>
</dbReference>
<dbReference type="RefSeq" id="WP_011375160.1">
    <property type="nucleotide sequence ID" value="NC_007576.1"/>
</dbReference>
<dbReference type="SMR" id="Q38VL2"/>
<dbReference type="STRING" id="314315.LCA_1469"/>
<dbReference type="KEGG" id="lsa:LCA_1469"/>
<dbReference type="eggNOG" id="COG4108">
    <property type="taxonomic scope" value="Bacteria"/>
</dbReference>
<dbReference type="HOGENOM" id="CLU_002794_2_1_9"/>
<dbReference type="OrthoDB" id="9804431at2"/>
<dbReference type="Proteomes" id="UP000002707">
    <property type="component" value="Chromosome"/>
</dbReference>
<dbReference type="GO" id="GO:0005829">
    <property type="term" value="C:cytosol"/>
    <property type="evidence" value="ECO:0007669"/>
    <property type="project" value="TreeGrafter"/>
</dbReference>
<dbReference type="GO" id="GO:0005525">
    <property type="term" value="F:GTP binding"/>
    <property type="evidence" value="ECO:0007669"/>
    <property type="project" value="UniProtKB-UniRule"/>
</dbReference>
<dbReference type="GO" id="GO:0003924">
    <property type="term" value="F:GTPase activity"/>
    <property type="evidence" value="ECO:0007669"/>
    <property type="project" value="InterPro"/>
</dbReference>
<dbReference type="GO" id="GO:0016150">
    <property type="term" value="F:translation release factor activity, codon nonspecific"/>
    <property type="evidence" value="ECO:0007669"/>
    <property type="project" value="TreeGrafter"/>
</dbReference>
<dbReference type="GO" id="GO:0016149">
    <property type="term" value="F:translation release factor activity, codon specific"/>
    <property type="evidence" value="ECO:0007669"/>
    <property type="project" value="UniProtKB-UniRule"/>
</dbReference>
<dbReference type="GO" id="GO:0006449">
    <property type="term" value="P:regulation of translational termination"/>
    <property type="evidence" value="ECO:0007669"/>
    <property type="project" value="UniProtKB-UniRule"/>
</dbReference>
<dbReference type="CDD" id="cd04169">
    <property type="entry name" value="RF3"/>
    <property type="match status" value="1"/>
</dbReference>
<dbReference type="CDD" id="cd16259">
    <property type="entry name" value="RF3_III"/>
    <property type="match status" value="1"/>
</dbReference>
<dbReference type="FunFam" id="2.40.30.10:FF:000040">
    <property type="entry name" value="Peptide chain release factor 3"/>
    <property type="match status" value="1"/>
</dbReference>
<dbReference type="FunFam" id="3.30.70.3280:FF:000001">
    <property type="entry name" value="Peptide chain release factor 3"/>
    <property type="match status" value="1"/>
</dbReference>
<dbReference type="FunFam" id="3.40.50.300:FF:000542">
    <property type="entry name" value="Peptide chain release factor 3"/>
    <property type="match status" value="1"/>
</dbReference>
<dbReference type="Gene3D" id="3.40.50.300">
    <property type="entry name" value="P-loop containing nucleotide triphosphate hydrolases"/>
    <property type="match status" value="1"/>
</dbReference>
<dbReference type="Gene3D" id="3.30.70.3280">
    <property type="entry name" value="Peptide chain release factor 3, domain III"/>
    <property type="match status" value="1"/>
</dbReference>
<dbReference type="Gene3D" id="2.40.30.10">
    <property type="entry name" value="Translation factors"/>
    <property type="match status" value="1"/>
</dbReference>
<dbReference type="HAMAP" id="MF_00072">
    <property type="entry name" value="Rel_fac_3"/>
    <property type="match status" value="1"/>
</dbReference>
<dbReference type="InterPro" id="IPR053905">
    <property type="entry name" value="EF-G-like_DII"/>
</dbReference>
<dbReference type="InterPro" id="IPR035647">
    <property type="entry name" value="EFG_III/V"/>
</dbReference>
<dbReference type="InterPro" id="IPR031157">
    <property type="entry name" value="G_TR_CS"/>
</dbReference>
<dbReference type="InterPro" id="IPR027417">
    <property type="entry name" value="P-loop_NTPase"/>
</dbReference>
<dbReference type="InterPro" id="IPR004548">
    <property type="entry name" value="PrfC"/>
</dbReference>
<dbReference type="InterPro" id="IPR032090">
    <property type="entry name" value="RF3_C"/>
</dbReference>
<dbReference type="InterPro" id="IPR038467">
    <property type="entry name" value="RF3_dom_3_sf"/>
</dbReference>
<dbReference type="InterPro" id="IPR041732">
    <property type="entry name" value="RF3_GTP-bd"/>
</dbReference>
<dbReference type="InterPro" id="IPR005225">
    <property type="entry name" value="Small_GTP-bd"/>
</dbReference>
<dbReference type="InterPro" id="IPR000795">
    <property type="entry name" value="T_Tr_GTP-bd_dom"/>
</dbReference>
<dbReference type="InterPro" id="IPR009000">
    <property type="entry name" value="Transl_B-barrel_sf"/>
</dbReference>
<dbReference type="NCBIfam" id="TIGR00503">
    <property type="entry name" value="prfC"/>
    <property type="match status" value="1"/>
</dbReference>
<dbReference type="NCBIfam" id="NF001964">
    <property type="entry name" value="PRK00741.1"/>
    <property type="match status" value="1"/>
</dbReference>
<dbReference type="NCBIfam" id="TIGR00231">
    <property type="entry name" value="small_GTP"/>
    <property type="match status" value="1"/>
</dbReference>
<dbReference type="PANTHER" id="PTHR43556">
    <property type="entry name" value="PEPTIDE CHAIN RELEASE FACTOR RF3"/>
    <property type="match status" value="1"/>
</dbReference>
<dbReference type="PANTHER" id="PTHR43556:SF2">
    <property type="entry name" value="PEPTIDE CHAIN RELEASE FACTOR RF3"/>
    <property type="match status" value="1"/>
</dbReference>
<dbReference type="Pfam" id="PF22042">
    <property type="entry name" value="EF-G_D2"/>
    <property type="match status" value="1"/>
</dbReference>
<dbReference type="Pfam" id="PF00009">
    <property type="entry name" value="GTP_EFTU"/>
    <property type="match status" value="1"/>
</dbReference>
<dbReference type="Pfam" id="PF16658">
    <property type="entry name" value="RF3_C"/>
    <property type="match status" value="1"/>
</dbReference>
<dbReference type="PRINTS" id="PR00315">
    <property type="entry name" value="ELONGATNFCT"/>
</dbReference>
<dbReference type="SUPFAM" id="SSF54980">
    <property type="entry name" value="EF-G C-terminal domain-like"/>
    <property type="match status" value="1"/>
</dbReference>
<dbReference type="SUPFAM" id="SSF52540">
    <property type="entry name" value="P-loop containing nucleoside triphosphate hydrolases"/>
    <property type="match status" value="1"/>
</dbReference>
<dbReference type="SUPFAM" id="SSF50447">
    <property type="entry name" value="Translation proteins"/>
    <property type="match status" value="1"/>
</dbReference>
<dbReference type="PROSITE" id="PS00301">
    <property type="entry name" value="G_TR_1"/>
    <property type="match status" value="1"/>
</dbReference>
<dbReference type="PROSITE" id="PS51722">
    <property type="entry name" value="G_TR_2"/>
    <property type="match status" value="1"/>
</dbReference>